<reference key="1">
    <citation type="submission" date="2006-01" db="EMBL/GenBank/DDBJ databases">
        <title>Complete sequence of Rhodopseudomonas palustris HaA2.</title>
        <authorList>
            <consortium name="US DOE Joint Genome Institute"/>
            <person name="Copeland A."/>
            <person name="Lucas S."/>
            <person name="Lapidus A."/>
            <person name="Barry K."/>
            <person name="Detter J.C."/>
            <person name="Glavina T."/>
            <person name="Hammon N."/>
            <person name="Israni S."/>
            <person name="Pitluck S."/>
            <person name="Chain P."/>
            <person name="Malfatti S."/>
            <person name="Shin M."/>
            <person name="Vergez L."/>
            <person name="Schmutz J."/>
            <person name="Larimer F."/>
            <person name="Land M."/>
            <person name="Hauser L."/>
            <person name="Pelletier D.A."/>
            <person name="Kyrpides N."/>
            <person name="Anderson I."/>
            <person name="Oda Y."/>
            <person name="Harwood C.S."/>
            <person name="Richardson P."/>
        </authorList>
    </citation>
    <scope>NUCLEOTIDE SEQUENCE [LARGE SCALE GENOMIC DNA]</scope>
    <source>
        <strain>HaA2</strain>
    </source>
</reference>
<feature type="chain" id="PRO_0000256606" description="Trigger factor">
    <location>
        <begin position="1"/>
        <end position="452"/>
    </location>
</feature>
<feature type="domain" description="PPIase FKBP-type" evidence="1">
    <location>
        <begin position="171"/>
        <end position="256"/>
    </location>
</feature>
<dbReference type="EC" id="5.2.1.8" evidence="1"/>
<dbReference type="EMBL" id="CP000250">
    <property type="protein sequence ID" value="ABD07265.1"/>
    <property type="molecule type" value="Genomic_DNA"/>
</dbReference>
<dbReference type="RefSeq" id="WP_011441450.1">
    <property type="nucleotide sequence ID" value="NC_007778.1"/>
</dbReference>
<dbReference type="SMR" id="Q2IWZ5"/>
<dbReference type="STRING" id="316058.RPB_2562"/>
<dbReference type="KEGG" id="rpb:RPB_2562"/>
<dbReference type="eggNOG" id="COG0544">
    <property type="taxonomic scope" value="Bacteria"/>
</dbReference>
<dbReference type="HOGENOM" id="CLU_033058_2_2_5"/>
<dbReference type="OrthoDB" id="9767721at2"/>
<dbReference type="Proteomes" id="UP000008809">
    <property type="component" value="Chromosome"/>
</dbReference>
<dbReference type="GO" id="GO:0005737">
    <property type="term" value="C:cytoplasm"/>
    <property type="evidence" value="ECO:0007669"/>
    <property type="project" value="UniProtKB-SubCell"/>
</dbReference>
<dbReference type="GO" id="GO:0003755">
    <property type="term" value="F:peptidyl-prolyl cis-trans isomerase activity"/>
    <property type="evidence" value="ECO:0007669"/>
    <property type="project" value="UniProtKB-UniRule"/>
</dbReference>
<dbReference type="GO" id="GO:0044183">
    <property type="term" value="F:protein folding chaperone"/>
    <property type="evidence" value="ECO:0007669"/>
    <property type="project" value="TreeGrafter"/>
</dbReference>
<dbReference type="GO" id="GO:0043022">
    <property type="term" value="F:ribosome binding"/>
    <property type="evidence" value="ECO:0007669"/>
    <property type="project" value="TreeGrafter"/>
</dbReference>
<dbReference type="GO" id="GO:0051083">
    <property type="term" value="P:'de novo' cotranslational protein folding"/>
    <property type="evidence" value="ECO:0007669"/>
    <property type="project" value="TreeGrafter"/>
</dbReference>
<dbReference type="GO" id="GO:0051301">
    <property type="term" value="P:cell division"/>
    <property type="evidence" value="ECO:0007669"/>
    <property type="project" value="UniProtKB-KW"/>
</dbReference>
<dbReference type="GO" id="GO:0061077">
    <property type="term" value="P:chaperone-mediated protein folding"/>
    <property type="evidence" value="ECO:0007669"/>
    <property type="project" value="TreeGrafter"/>
</dbReference>
<dbReference type="GO" id="GO:0015031">
    <property type="term" value="P:protein transport"/>
    <property type="evidence" value="ECO:0007669"/>
    <property type="project" value="UniProtKB-UniRule"/>
</dbReference>
<dbReference type="GO" id="GO:0043335">
    <property type="term" value="P:protein unfolding"/>
    <property type="evidence" value="ECO:0007669"/>
    <property type="project" value="TreeGrafter"/>
</dbReference>
<dbReference type="FunFam" id="3.10.50.40:FF:000001">
    <property type="entry name" value="Trigger factor"/>
    <property type="match status" value="1"/>
</dbReference>
<dbReference type="Gene3D" id="3.10.50.40">
    <property type="match status" value="1"/>
</dbReference>
<dbReference type="Gene3D" id="3.30.70.1050">
    <property type="entry name" value="Trigger factor ribosome-binding domain"/>
    <property type="match status" value="1"/>
</dbReference>
<dbReference type="Gene3D" id="1.10.3120.10">
    <property type="entry name" value="Trigger factor, C-terminal domain"/>
    <property type="match status" value="1"/>
</dbReference>
<dbReference type="HAMAP" id="MF_00303">
    <property type="entry name" value="Trigger_factor_Tig"/>
    <property type="match status" value="1"/>
</dbReference>
<dbReference type="InterPro" id="IPR046357">
    <property type="entry name" value="PPIase_dom_sf"/>
</dbReference>
<dbReference type="InterPro" id="IPR001179">
    <property type="entry name" value="PPIase_FKBP_dom"/>
</dbReference>
<dbReference type="InterPro" id="IPR005215">
    <property type="entry name" value="Trig_fac"/>
</dbReference>
<dbReference type="InterPro" id="IPR008880">
    <property type="entry name" value="Trigger_fac_C"/>
</dbReference>
<dbReference type="InterPro" id="IPR037041">
    <property type="entry name" value="Trigger_fac_C_sf"/>
</dbReference>
<dbReference type="InterPro" id="IPR008881">
    <property type="entry name" value="Trigger_fac_ribosome-bd_bac"/>
</dbReference>
<dbReference type="InterPro" id="IPR036611">
    <property type="entry name" value="Trigger_fac_ribosome-bd_sf"/>
</dbReference>
<dbReference type="InterPro" id="IPR027304">
    <property type="entry name" value="Trigger_fact/SurA_dom_sf"/>
</dbReference>
<dbReference type="NCBIfam" id="TIGR00115">
    <property type="entry name" value="tig"/>
    <property type="match status" value="1"/>
</dbReference>
<dbReference type="PANTHER" id="PTHR30560">
    <property type="entry name" value="TRIGGER FACTOR CHAPERONE AND PEPTIDYL-PROLYL CIS/TRANS ISOMERASE"/>
    <property type="match status" value="1"/>
</dbReference>
<dbReference type="PANTHER" id="PTHR30560:SF3">
    <property type="entry name" value="TRIGGER FACTOR-LIKE PROTEIN TIG, CHLOROPLASTIC"/>
    <property type="match status" value="1"/>
</dbReference>
<dbReference type="Pfam" id="PF00254">
    <property type="entry name" value="FKBP_C"/>
    <property type="match status" value="1"/>
</dbReference>
<dbReference type="Pfam" id="PF05698">
    <property type="entry name" value="Trigger_C"/>
    <property type="match status" value="1"/>
</dbReference>
<dbReference type="Pfam" id="PF05697">
    <property type="entry name" value="Trigger_N"/>
    <property type="match status" value="1"/>
</dbReference>
<dbReference type="PIRSF" id="PIRSF003095">
    <property type="entry name" value="Trigger_factor"/>
    <property type="match status" value="1"/>
</dbReference>
<dbReference type="SUPFAM" id="SSF54534">
    <property type="entry name" value="FKBP-like"/>
    <property type="match status" value="1"/>
</dbReference>
<dbReference type="SUPFAM" id="SSF109998">
    <property type="entry name" value="Triger factor/SurA peptide-binding domain-like"/>
    <property type="match status" value="1"/>
</dbReference>
<dbReference type="SUPFAM" id="SSF102735">
    <property type="entry name" value="Trigger factor ribosome-binding domain"/>
    <property type="match status" value="1"/>
</dbReference>
<dbReference type="PROSITE" id="PS50059">
    <property type="entry name" value="FKBP_PPIASE"/>
    <property type="match status" value="1"/>
</dbReference>
<organism>
    <name type="scientific">Rhodopseudomonas palustris (strain HaA2)</name>
    <dbReference type="NCBI Taxonomy" id="316058"/>
    <lineage>
        <taxon>Bacteria</taxon>
        <taxon>Pseudomonadati</taxon>
        <taxon>Pseudomonadota</taxon>
        <taxon>Alphaproteobacteria</taxon>
        <taxon>Hyphomicrobiales</taxon>
        <taxon>Nitrobacteraceae</taxon>
        <taxon>Rhodopseudomonas</taxon>
    </lineage>
</organism>
<keyword id="KW-0131">Cell cycle</keyword>
<keyword id="KW-0132">Cell division</keyword>
<keyword id="KW-0143">Chaperone</keyword>
<keyword id="KW-0963">Cytoplasm</keyword>
<keyword id="KW-0413">Isomerase</keyword>
<keyword id="KW-1185">Reference proteome</keyword>
<keyword id="KW-0697">Rotamase</keyword>
<proteinExistence type="inferred from homology"/>
<protein>
    <recommendedName>
        <fullName evidence="1">Trigger factor</fullName>
        <shortName evidence="1">TF</shortName>
        <ecNumber evidence="1">5.2.1.8</ecNumber>
    </recommendedName>
    <alternativeName>
        <fullName evidence="1">PPIase</fullName>
    </alternativeName>
</protein>
<gene>
    <name evidence="1" type="primary">tig</name>
    <name type="ordered locus">RPB_2562</name>
</gene>
<sequence>MQVKETVADGLKREFEVNVPAADIDAQVDARLVDLKDKVKLNGFRPGKVPVSHLKRVYGRSVAAETIDKLVRETNDGIFAERGFRLATEPKITMPQDQKVVEDILAGKSDLNYTVAIEVVPTIELADFKSFSVEKPVVEVSDSDVDDAIKRIAEANRAYADKAEGAKAESGDRVTISFKGSIEGVPFDGGTGEDIPVVIGSNSFIPGFEDQLIGIAVGETRTIKVTFPTNYASETLAGKPAEFETTATKVEAPQDTTIDDEFAKTLGMESLDKLKEAAKARLAAEYAGATRLRVKRQLLDRLDETHKFDAPPSLVEQEFAVMWQSINAEMQQNGKSFADEDTTEEAAREEYRKIADRRVRLGLVLSEIGEKNKIQVTDDEVSRAVIERARQMPGREKEVWDFYRSNAEALAQLRAPIYEDKVVDFILELATVTEKPVTREELYKDDDDKTAA</sequence>
<name>TIG_RHOP2</name>
<accession>Q2IWZ5</accession>
<comment type="function">
    <text evidence="1">Involved in protein export. Acts as a chaperone by maintaining the newly synthesized protein in an open conformation. Functions as a peptidyl-prolyl cis-trans isomerase.</text>
</comment>
<comment type="catalytic activity">
    <reaction evidence="1">
        <text>[protein]-peptidylproline (omega=180) = [protein]-peptidylproline (omega=0)</text>
        <dbReference type="Rhea" id="RHEA:16237"/>
        <dbReference type="Rhea" id="RHEA-COMP:10747"/>
        <dbReference type="Rhea" id="RHEA-COMP:10748"/>
        <dbReference type="ChEBI" id="CHEBI:83833"/>
        <dbReference type="ChEBI" id="CHEBI:83834"/>
        <dbReference type="EC" id="5.2.1.8"/>
    </reaction>
</comment>
<comment type="subcellular location">
    <subcellularLocation>
        <location>Cytoplasm</location>
    </subcellularLocation>
    <text evidence="1">About half TF is bound to the ribosome near the polypeptide exit tunnel while the other half is free in the cytoplasm.</text>
</comment>
<comment type="domain">
    <text evidence="1">Consists of 3 domains; the N-terminus binds the ribosome, the middle domain has PPIase activity, while the C-terminus has intrinsic chaperone activity on its own.</text>
</comment>
<comment type="similarity">
    <text evidence="1">Belongs to the FKBP-type PPIase family. Tig subfamily.</text>
</comment>
<evidence type="ECO:0000255" key="1">
    <source>
        <dbReference type="HAMAP-Rule" id="MF_00303"/>
    </source>
</evidence>